<sequence length="561" mass="63529">MRWILCWSLTLCLMAQTALGALHTKRPQVVTKYGTLQGKQMHVGKTPIQVFLGVPFSRPPLGILRFAPPEPPEPWKGIRDATTYPPGCLQESWGQLASMYVSTRERYKWLRFSEDCLYLNVYAPARAPGDPQLPVMVWFPGGAFIVGAASSYEGSDLAAREKVVLVFLQHRLGIFGFLSTDDSHARGNWGLLDQMAALRWVQENIAAFGGDPGNVTLFGQSAGAMSISGLMMSPLASGLFHRAISQSGTALFRLFITSNPLKVAKKVAHLAGCNHNSTQILVNCLRALSGTKVMRVSNKMRFLQLNFQRDPEEIIWSMSPVVDGVVIPDDPLVLLTQGKVSSVPYLLGVNNLEFNWLLPYIMKFPLNRQAMRKETITKMLWSTRTLLNITKEQVPLVVEEYLDNVNEHDWKMLRNRMMDIVQDATFVYATLQTAHYHRDAGLPVYLYEFEHHARGIIVKPRTDGADHGDEMYFLFGGPFATGLSMGKEKALSLQMMKYWANFARTGNPNDGNLPCWPRYNKDEKYLQLDFTTRVGMKLKEKKMAFWMSLYQSQRPEKQRQF</sequence>
<gene>
    <name type="primary">CES4A</name>
    <name type="synonym">CES8</name>
    <name type="ORF">UNQ440/PRO873</name>
</gene>
<reference key="1">
    <citation type="journal article" date="2004" name="Nat. Genet.">
        <title>Complete sequencing and characterization of 21,243 full-length human cDNAs.</title>
        <authorList>
            <person name="Ota T."/>
            <person name="Suzuki Y."/>
            <person name="Nishikawa T."/>
            <person name="Otsuki T."/>
            <person name="Sugiyama T."/>
            <person name="Irie R."/>
            <person name="Wakamatsu A."/>
            <person name="Hayashi K."/>
            <person name="Sato H."/>
            <person name="Nagai K."/>
            <person name="Kimura K."/>
            <person name="Makita H."/>
            <person name="Sekine M."/>
            <person name="Obayashi M."/>
            <person name="Nishi T."/>
            <person name="Shibahara T."/>
            <person name="Tanaka T."/>
            <person name="Ishii S."/>
            <person name="Yamamoto J."/>
            <person name="Saito K."/>
            <person name="Kawai Y."/>
            <person name="Isono Y."/>
            <person name="Nakamura Y."/>
            <person name="Nagahari K."/>
            <person name="Murakami K."/>
            <person name="Yasuda T."/>
            <person name="Iwayanagi T."/>
            <person name="Wagatsuma M."/>
            <person name="Shiratori A."/>
            <person name="Sudo H."/>
            <person name="Hosoiri T."/>
            <person name="Kaku Y."/>
            <person name="Kodaira H."/>
            <person name="Kondo H."/>
            <person name="Sugawara M."/>
            <person name="Takahashi M."/>
            <person name="Kanda K."/>
            <person name="Yokoi T."/>
            <person name="Furuya T."/>
            <person name="Kikkawa E."/>
            <person name="Omura Y."/>
            <person name="Abe K."/>
            <person name="Kamihara K."/>
            <person name="Katsuta N."/>
            <person name="Sato K."/>
            <person name="Tanikawa M."/>
            <person name="Yamazaki M."/>
            <person name="Ninomiya K."/>
            <person name="Ishibashi T."/>
            <person name="Yamashita H."/>
            <person name="Murakawa K."/>
            <person name="Fujimori K."/>
            <person name="Tanai H."/>
            <person name="Kimata M."/>
            <person name="Watanabe M."/>
            <person name="Hiraoka S."/>
            <person name="Chiba Y."/>
            <person name="Ishida S."/>
            <person name="Ono Y."/>
            <person name="Takiguchi S."/>
            <person name="Watanabe S."/>
            <person name="Yosida M."/>
            <person name="Hotuta T."/>
            <person name="Kusano J."/>
            <person name="Kanehori K."/>
            <person name="Takahashi-Fujii A."/>
            <person name="Hara H."/>
            <person name="Tanase T.-O."/>
            <person name="Nomura Y."/>
            <person name="Togiya S."/>
            <person name="Komai F."/>
            <person name="Hara R."/>
            <person name="Takeuchi K."/>
            <person name="Arita M."/>
            <person name="Imose N."/>
            <person name="Musashino K."/>
            <person name="Yuuki H."/>
            <person name="Oshima A."/>
            <person name="Sasaki N."/>
            <person name="Aotsuka S."/>
            <person name="Yoshikawa Y."/>
            <person name="Matsunawa H."/>
            <person name="Ichihara T."/>
            <person name="Shiohata N."/>
            <person name="Sano S."/>
            <person name="Moriya S."/>
            <person name="Momiyama H."/>
            <person name="Satoh N."/>
            <person name="Takami S."/>
            <person name="Terashima Y."/>
            <person name="Suzuki O."/>
            <person name="Nakagawa S."/>
            <person name="Senoh A."/>
            <person name="Mizoguchi H."/>
            <person name="Goto Y."/>
            <person name="Shimizu F."/>
            <person name="Wakebe H."/>
            <person name="Hishigaki H."/>
            <person name="Watanabe T."/>
            <person name="Sugiyama A."/>
            <person name="Takemoto M."/>
            <person name="Kawakami B."/>
            <person name="Yamazaki M."/>
            <person name="Watanabe K."/>
            <person name="Kumagai A."/>
            <person name="Itakura S."/>
            <person name="Fukuzumi Y."/>
            <person name="Fujimori Y."/>
            <person name="Komiyama M."/>
            <person name="Tashiro H."/>
            <person name="Tanigami A."/>
            <person name="Fujiwara T."/>
            <person name="Ono T."/>
            <person name="Yamada K."/>
            <person name="Fujii Y."/>
            <person name="Ozaki K."/>
            <person name="Hirao M."/>
            <person name="Ohmori Y."/>
            <person name="Kawabata A."/>
            <person name="Hikiji T."/>
            <person name="Kobatake N."/>
            <person name="Inagaki H."/>
            <person name="Ikema Y."/>
            <person name="Okamoto S."/>
            <person name="Okitani R."/>
            <person name="Kawakami T."/>
            <person name="Noguchi S."/>
            <person name="Itoh T."/>
            <person name="Shigeta K."/>
            <person name="Senba T."/>
            <person name="Matsumura K."/>
            <person name="Nakajima Y."/>
            <person name="Mizuno T."/>
            <person name="Morinaga M."/>
            <person name="Sasaki M."/>
            <person name="Togashi T."/>
            <person name="Oyama M."/>
            <person name="Hata H."/>
            <person name="Watanabe M."/>
            <person name="Komatsu T."/>
            <person name="Mizushima-Sugano J."/>
            <person name="Satoh T."/>
            <person name="Shirai Y."/>
            <person name="Takahashi Y."/>
            <person name="Nakagawa K."/>
            <person name="Okumura K."/>
            <person name="Nagase T."/>
            <person name="Nomura N."/>
            <person name="Kikuchi H."/>
            <person name="Masuho Y."/>
            <person name="Yamashita R."/>
            <person name="Nakai K."/>
            <person name="Yada T."/>
            <person name="Nakamura Y."/>
            <person name="Ohara O."/>
            <person name="Isogai T."/>
            <person name="Sugano S."/>
        </authorList>
    </citation>
    <scope>NUCLEOTIDE SEQUENCE [LARGE SCALE MRNA] (ISOFORMS 3; 4; 5 AND 6)</scope>
    <source>
        <tissue>Hippocampus</tissue>
        <tissue>Neuroepithelioma</tissue>
        <tissue>Thalamus</tissue>
        <tissue>Uterus</tissue>
    </source>
</reference>
<reference key="2">
    <citation type="journal article" date="2004" name="Nature">
        <title>The sequence and analysis of duplication-rich human chromosome 16.</title>
        <authorList>
            <person name="Martin J."/>
            <person name="Han C."/>
            <person name="Gordon L.A."/>
            <person name="Terry A."/>
            <person name="Prabhakar S."/>
            <person name="She X."/>
            <person name="Xie G."/>
            <person name="Hellsten U."/>
            <person name="Chan Y.M."/>
            <person name="Altherr M."/>
            <person name="Couronne O."/>
            <person name="Aerts A."/>
            <person name="Bajorek E."/>
            <person name="Black S."/>
            <person name="Blumer H."/>
            <person name="Branscomb E."/>
            <person name="Brown N.C."/>
            <person name="Bruno W.J."/>
            <person name="Buckingham J.M."/>
            <person name="Callen D.F."/>
            <person name="Campbell C.S."/>
            <person name="Campbell M.L."/>
            <person name="Campbell E.W."/>
            <person name="Caoile C."/>
            <person name="Challacombe J.F."/>
            <person name="Chasteen L.A."/>
            <person name="Chertkov O."/>
            <person name="Chi H.C."/>
            <person name="Christensen M."/>
            <person name="Clark L.M."/>
            <person name="Cohn J.D."/>
            <person name="Denys M."/>
            <person name="Detter J.C."/>
            <person name="Dickson M."/>
            <person name="Dimitrijevic-Bussod M."/>
            <person name="Escobar J."/>
            <person name="Fawcett J.J."/>
            <person name="Flowers D."/>
            <person name="Fotopulos D."/>
            <person name="Glavina T."/>
            <person name="Gomez M."/>
            <person name="Gonzales E."/>
            <person name="Goodstein D."/>
            <person name="Goodwin L.A."/>
            <person name="Grady D.L."/>
            <person name="Grigoriev I."/>
            <person name="Groza M."/>
            <person name="Hammon N."/>
            <person name="Hawkins T."/>
            <person name="Haydu L."/>
            <person name="Hildebrand C.E."/>
            <person name="Huang W."/>
            <person name="Israni S."/>
            <person name="Jett J."/>
            <person name="Jewett P.B."/>
            <person name="Kadner K."/>
            <person name="Kimball H."/>
            <person name="Kobayashi A."/>
            <person name="Krawczyk M.-C."/>
            <person name="Leyba T."/>
            <person name="Longmire J.L."/>
            <person name="Lopez F."/>
            <person name="Lou Y."/>
            <person name="Lowry S."/>
            <person name="Ludeman T."/>
            <person name="Manohar C.F."/>
            <person name="Mark G.A."/>
            <person name="McMurray K.L."/>
            <person name="Meincke L.J."/>
            <person name="Morgan J."/>
            <person name="Moyzis R.K."/>
            <person name="Mundt M.O."/>
            <person name="Munk A.C."/>
            <person name="Nandkeshwar R.D."/>
            <person name="Pitluck S."/>
            <person name="Pollard M."/>
            <person name="Predki P."/>
            <person name="Parson-Quintana B."/>
            <person name="Ramirez L."/>
            <person name="Rash S."/>
            <person name="Retterer J."/>
            <person name="Ricke D.O."/>
            <person name="Robinson D.L."/>
            <person name="Rodriguez A."/>
            <person name="Salamov A."/>
            <person name="Saunders E.H."/>
            <person name="Scott D."/>
            <person name="Shough T."/>
            <person name="Stallings R.L."/>
            <person name="Stalvey M."/>
            <person name="Sutherland R.D."/>
            <person name="Tapia R."/>
            <person name="Tesmer J.G."/>
            <person name="Thayer N."/>
            <person name="Thompson L.S."/>
            <person name="Tice H."/>
            <person name="Torney D.C."/>
            <person name="Tran-Gyamfi M."/>
            <person name="Tsai M."/>
            <person name="Ulanovsky L.E."/>
            <person name="Ustaszewska A."/>
            <person name="Vo N."/>
            <person name="White P.S."/>
            <person name="Williams A.L."/>
            <person name="Wills P.L."/>
            <person name="Wu J.-R."/>
            <person name="Wu K."/>
            <person name="Yang J."/>
            <person name="DeJong P."/>
            <person name="Bruce D."/>
            <person name="Doggett N.A."/>
            <person name="Deaven L."/>
            <person name="Schmutz J."/>
            <person name="Grimwood J."/>
            <person name="Richardson P."/>
            <person name="Rokhsar D.S."/>
            <person name="Eichler E.E."/>
            <person name="Gilna P."/>
            <person name="Lucas S.M."/>
            <person name="Myers R.M."/>
            <person name="Rubin E.M."/>
            <person name="Pennacchio L.A."/>
        </authorList>
    </citation>
    <scope>NUCLEOTIDE SEQUENCE [LARGE SCALE GENOMIC DNA]</scope>
</reference>
<reference key="3">
    <citation type="journal article" date="2003" name="Genome Res.">
        <title>The secreted protein discovery initiative (SPDI), a large-scale effort to identify novel human secreted and transmembrane proteins: a bioinformatics assessment.</title>
        <authorList>
            <person name="Clark H.F."/>
            <person name="Gurney A.L."/>
            <person name="Abaya E."/>
            <person name="Baker K."/>
            <person name="Baldwin D.T."/>
            <person name="Brush J."/>
            <person name="Chen J."/>
            <person name="Chow B."/>
            <person name="Chui C."/>
            <person name="Crowley C."/>
            <person name="Currell B."/>
            <person name="Deuel B."/>
            <person name="Dowd P."/>
            <person name="Eaton D."/>
            <person name="Foster J.S."/>
            <person name="Grimaldi C."/>
            <person name="Gu Q."/>
            <person name="Hass P.E."/>
            <person name="Heldens S."/>
            <person name="Huang A."/>
            <person name="Kim H.S."/>
            <person name="Klimowski L."/>
            <person name="Jin Y."/>
            <person name="Johnson S."/>
            <person name="Lee J."/>
            <person name="Lewis L."/>
            <person name="Liao D."/>
            <person name="Mark M.R."/>
            <person name="Robbie E."/>
            <person name="Sanchez C."/>
            <person name="Schoenfeld J."/>
            <person name="Seshagiri S."/>
            <person name="Simmons L."/>
            <person name="Singh J."/>
            <person name="Smith V."/>
            <person name="Stinson J."/>
            <person name="Vagts A."/>
            <person name="Vandlen R.L."/>
            <person name="Watanabe C."/>
            <person name="Wieand D."/>
            <person name="Woods K."/>
            <person name="Xie M.-H."/>
            <person name="Yansura D.G."/>
            <person name="Yi S."/>
            <person name="Yu G."/>
            <person name="Yuan J."/>
            <person name="Zhang M."/>
            <person name="Zhang Z."/>
            <person name="Goddard A.D."/>
            <person name="Wood W.I."/>
            <person name="Godowski P.J."/>
            <person name="Gray A.M."/>
        </authorList>
    </citation>
    <scope>NUCLEOTIDE SEQUENCE [LARGE SCALE MRNA] OF 20-561 (ISOFORM 7)</scope>
</reference>
<reference key="4">
    <citation type="journal article" date="2004" name="Genome Res.">
        <title>The status, quality, and expansion of the NIH full-length cDNA project: the Mammalian Gene Collection (MGC).</title>
        <authorList>
            <consortium name="The MGC Project Team"/>
        </authorList>
    </citation>
    <scope>NUCLEOTIDE SEQUENCE [LARGE SCALE MRNA] OF 38-561 (ISOFORM 2)</scope>
    <source>
        <tissue>Blood</tissue>
    </source>
</reference>
<name>EST4A_HUMAN</name>
<organism>
    <name type="scientific">Homo sapiens</name>
    <name type="common">Human</name>
    <dbReference type="NCBI Taxonomy" id="9606"/>
    <lineage>
        <taxon>Eukaryota</taxon>
        <taxon>Metazoa</taxon>
        <taxon>Chordata</taxon>
        <taxon>Craniata</taxon>
        <taxon>Vertebrata</taxon>
        <taxon>Euteleostomi</taxon>
        <taxon>Mammalia</taxon>
        <taxon>Eutheria</taxon>
        <taxon>Euarchontoglires</taxon>
        <taxon>Primates</taxon>
        <taxon>Haplorrhini</taxon>
        <taxon>Catarrhini</taxon>
        <taxon>Hominidae</taxon>
        <taxon>Homo</taxon>
    </lineage>
</organism>
<feature type="signal peptide" evidence="2">
    <location>
        <begin position="1"/>
        <end position="20"/>
    </location>
</feature>
<feature type="chain" id="PRO_0000325923" description="Carboxylesterase 4A">
    <location>
        <begin position="21"/>
        <end position="561"/>
    </location>
</feature>
<feature type="active site" description="Acyl-ester intermediate" evidence="3">
    <location>
        <position position="221"/>
    </location>
</feature>
<feature type="active site" description="Charge relay system" evidence="1">
    <location>
        <position position="353"/>
    </location>
</feature>
<feature type="active site" description="Charge relay system" evidence="1">
    <location>
        <position position="467"/>
    </location>
</feature>
<feature type="glycosylation site" description="N-linked (GlcNAc...) asparagine" evidence="2">
    <location>
        <position position="214"/>
    </location>
</feature>
<feature type="glycosylation site" description="N-linked (GlcNAc...) asparagine" evidence="2">
    <location>
        <position position="276"/>
    </location>
</feature>
<feature type="glycosylation site" description="N-linked (GlcNAc...) asparagine" evidence="2">
    <location>
        <position position="388"/>
    </location>
</feature>
<feature type="disulfide bond" evidence="1">
    <location>
        <begin position="88"/>
        <end position="116"/>
    </location>
</feature>
<feature type="disulfide bond" evidence="1">
    <location>
        <begin position="273"/>
        <end position="284"/>
    </location>
</feature>
<feature type="splice variant" id="VSP_032480" description="In isoform 3." evidence="5">
    <location>
        <begin position="1"/>
        <end position="194"/>
    </location>
</feature>
<feature type="splice variant" id="VSP_040063" description="In isoform 5 and isoform 6." evidence="5">
    <location>
        <begin position="1"/>
        <end position="98"/>
    </location>
</feature>
<feature type="splice variant" id="VSP_040064" description="In isoform 7." evidence="4">
    <original>G</original>
    <variation>GWSLALSPGWSAVARSRLTATSASRVQASLLPQPLSVWGYR</variation>
    <location>
        <position position="87"/>
    </location>
</feature>
<feature type="splice variant" id="VSP_040065" description="In isoform 6." evidence="5">
    <original>S</original>
    <variation>RWRGR</variation>
    <location>
        <position position="179"/>
    </location>
</feature>
<feature type="splice variant" id="VSP_032483" description="In isoform 2 and isoform 7." evidence="4 6">
    <location>
        <begin position="361"/>
        <end position="387"/>
    </location>
</feature>
<feature type="splice variant" id="VSP_032485" description="In isoform 2." evidence="6">
    <location>
        <begin position="439"/>
        <end position="481"/>
    </location>
</feature>
<feature type="splice variant" id="VSP_040066" description="In isoform 4, isoform 6 and isoform 7." evidence="4 5">
    <original>DAGLPVYLYEFEHHARGIIVKPRTDGADHG</original>
    <variation>ETPMMGICPAGHATTRMKSTCSWILPQEWA</variation>
    <location>
        <begin position="439"/>
        <end position="468"/>
    </location>
</feature>
<feature type="splice variant" id="VSP_040067" description="In isoform 4, isoform 6 and isoform 7." evidence="4 5">
    <location>
        <begin position="469"/>
        <end position="561"/>
    </location>
</feature>
<feature type="sequence conflict" description="In Ref. 1; BAC04422." evidence="7" ref="1">
    <original>L</original>
    <variation>P</variation>
    <location>
        <position position="254"/>
    </location>
</feature>
<feature type="sequence conflict" description="In Ref. 1; BAH12248." evidence="7" ref="1">
    <original>K</original>
    <variation>N</variation>
    <location>
        <position position="265"/>
    </location>
</feature>
<proteinExistence type="evidence at protein level"/>
<evidence type="ECO:0000250" key="1"/>
<evidence type="ECO:0000255" key="2"/>
<evidence type="ECO:0000255" key="3">
    <source>
        <dbReference type="PROSITE-ProRule" id="PRU10039"/>
    </source>
</evidence>
<evidence type="ECO:0000303" key="4">
    <source>
    </source>
</evidence>
<evidence type="ECO:0000303" key="5">
    <source>
    </source>
</evidence>
<evidence type="ECO:0000303" key="6">
    <source>
    </source>
</evidence>
<evidence type="ECO:0000305" key="7"/>
<keyword id="KW-0025">Alternative splicing</keyword>
<keyword id="KW-1015">Disulfide bond</keyword>
<keyword id="KW-0325">Glycoprotein</keyword>
<keyword id="KW-0378">Hydrolase</keyword>
<keyword id="KW-1267">Proteomics identification</keyword>
<keyword id="KW-1185">Reference proteome</keyword>
<keyword id="KW-0964">Secreted</keyword>
<keyword id="KW-0719">Serine esterase</keyword>
<keyword id="KW-0732">Signal</keyword>
<accession>Q5XG92</accession>
<accession>A8KAJ6</accession>
<accession>B7Z349</accession>
<accession>B7Z3L2</accession>
<accession>B7Z6R3</accession>
<accession>Q6UX55</accession>
<accession>Q8N9F4</accession>
<comment type="function">
    <text evidence="1">Probable carboxylesterase.</text>
</comment>
<comment type="subcellular location">
    <subcellularLocation>
        <location evidence="7">Secreted</location>
    </subcellularLocation>
</comment>
<comment type="alternative products">
    <event type="alternative splicing"/>
    <isoform>
        <id>Q5XG92-1</id>
        <name>1</name>
        <sequence type="displayed"/>
    </isoform>
    <isoform>
        <id>Q5XG92-2</id>
        <name>2</name>
        <sequence type="described" ref="VSP_032483 VSP_032485"/>
    </isoform>
    <isoform>
        <id>Q5XG92-4</id>
        <name>3</name>
        <sequence type="described" ref="VSP_032480"/>
    </isoform>
    <isoform>
        <id>Q5XG92-5</id>
        <name>4</name>
        <sequence type="described" ref="VSP_040066 VSP_040067"/>
    </isoform>
    <isoform>
        <id>Q5XG92-6</id>
        <name>5</name>
        <sequence type="described" ref="VSP_040063"/>
    </isoform>
    <isoform>
        <id>Q5XG92-7</id>
        <name>6</name>
        <sequence type="described" ref="VSP_040063 VSP_040065 VSP_040066 VSP_040067"/>
    </isoform>
    <isoform>
        <id>Q5XG92-8</id>
        <name>7</name>
        <sequence type="described" ref="VSP_040064 VSP_032483 VSP_040066 VSP_040067"/>
    </isoform>
</comment>
<comment type="miscellaneous">
    <molecule>Isoform 2</molecule>
    <text evidence="7">Inactive.</text>
</comment>
<comment type="miscellaneous">
    <molecule>Isoform 3</molecule>
    <text evidence="7">May be produced at very low levels due to a premature stop codon in the mRNA, leading to nonsense-mediated mRNA decay.</text>
</comment>
<comment type="similarity">
    <text evidence="7">Belongs to the type-B carboxylesterase/lipase family.</text>
</comment>
<comment type="sequence caution" evidence="7">
    <conflict type="miscellaneous discrepancy">
        <sequence resource="EMBL-CDS" id="AAQ88868"/>
    </conflict>
    <text>Chimeric cDNA.</text>
</comment>
<comment type="sequence caution" evidence="7">
    <conflict type="erroneous initiation">
        <sequence resource="EMBL-CDS" id="BAH12248"/>
    </conflict>
    <text>Extended N-terminus.</text>
</comment>
<dbReference type="EC" id="3.1.1.-"/>
<dbReference type="EMBL" id="AK094783">
    <property type="protein sequence ID" value="BAC04422.1"/>
    <property type="molecule type" value="mRNA"/>
</dbReference>
<dbReference type="EMBL" id="AK293061">
    <property type="protein sequence ID" value="BAF85750.1"/>
    <property type="molecule type" value="mRNA"/>
</dbReference>
<dbReference type="EMBL" id="AK295483">
    <property type="protein sequence ID" value="BAH12085.1"/>
    <property type="molecule type" value="mRNA"/>
</dbReference>
<dbReference type="EMBL" id="AK296064">
    <property type="protein sequence ID" value="BAH12248.1"/>
    <property type="status" value="ALT_INIT"/>
    <property type="molecule type" value="mRNA"/>
</dbReference>
<dbReference type="EMBL" id="AK300792">
    <property type="protein sequence ID" value="BAH13349.1"/>
    <property type="molecule type" value="mRNA"/>
</dbReference>
<dbReference type="EMBL" id="AC009084">
    <property type="status" value="NOT_ANNOTATED_CDS"/>
    <property type="molecule type" value="Genomic_DNA"/>
</dbReference>
<dbReference type="EMBL" id="AY358504">
    <property type="protein sequence ID" value="AAQ88868.1"/>
    <property type="status" value="ALT_SEQ"/>
    <property type="molecule type" value="mRNA"/>
</dbReference>
<dbReference type="EMBL" id="BC084555">
    <property type="protein sequence ID" value="AAH84555.1"/>
    <property type="molecule type" value="mRNA"/>
</dbReference>
<dbReference type="CCDS" id="CCDS42174.3">
    <molecule id="Q5XG92-5"/>
</dbReference>
<dbReference type="CCDS" id="CCDS54024.1">
    <molecule id="Q5XG92-6"/>
</dbReference>
<dbReference type="CCDS" id="CCDS54025.1">
    <molecule id="Q5XG92-7"/>
</dbReference>
<dbReference type="CCDS" id="CCDS92173.1">
    <molecule id="Q5XG92-1"/>
</dbReference>
<dbReference type="RefSeq" id="NP_001177130.1">
    <molecule id="Q5XG92-6"/>
    <property type="nucleotide sequence ID" value="NM_001190201.2"/>
</dbReference>
<dbReference type="RefSeq" id="NP_001177131.1">
    <molecule id="Q5XG92-7"/>
    <property type="nucleotide sequence ID" value="NM_001190202.2"/>
</dbReference>
<dbReference type="RefSeq" id="NP_001305435.1">
    <molecule id="Q5XG92-4"/>
    <property type="nucleotide sequence ID" value="NM_001318506.2"/>
</dbReference>
<dbReference type="RefSeq" id="NP_001351711.1">
    <molecule id="Q5XG92-1"/>
    <property type="nucleotide sequence ID" value="NM_001364782.1"/>
</dbReference>
<dbReference type="RefSeq" id="NP_776176.5">
    <molecule id="Q5XG92-5"/>
    <property type="nucleotide sequence ID" value="NM_173815.6"/>
</dbReference>
<dbReference type="SMR" id="Q5XG92"/>
<dbReference type="BioGRID" id="129682">
    <property type="interactions" value="4"/>
</dbReference>
<dbReference type="FunCoup" id="Q5XG92">
    <property type="interactions" value="12"/>
</dbReference>
<dbReference type="STRING" id="9606.ENSP00000444052"/>
<dbReference type="ESTHER" id="human-CES4A">
    <property type="family name" value="Carb_B_Chordata"/>
</dbReference>
<dbReference type="MEROPS" id="S09.959"/>
<dbReference type="GlyCosmos" id="Q5XG92">
    <property type="glycosylation" value="3 sites, No reported glycans"/>
</dbReference>
<dbReference type="GlyGen" id="Q5XG92">
    <property type="glycosylation" value="6 sites, 2 N-linked glycans (1 site), 1 O-linked glycan (3 sites)"/>
</dbReference>
<dbReference type="iPTMnet" id="Q5XG92"/>
<dbReference type="PhosphoSitePlus" id="Q5XG92"/>
<dbReference type="BioMuta" id="CES4A"/>
<dbReference type="DMDM" id="172045957"/>
<dbReference type="MassIVE" id="Q5XG92"/>
<dbReference type="PaxDb" id="9606-ENSP00000444052"/>
<dbReference type="PeptideAtlas" id="Q5XG92"/>
<dbReference type="ProteomicsDB" id="65816">
    <molecule id="Q5XG92-1"/>
</dbReference>
<dbReference type="ProteomicsDB" id="65817">
    <molecule id="Q5XG92-2"/>
</dbReference>
<dbReference type="ProteomicsDB" id="65818">
    <molecule id="Q5XG92-4"/>
</dbReference>
<dbReference type="ProteomicsDB" id="65820">
    <molecule id="Q5XG92-6"/>
</dbReference>
<dbReference type="Antibodypedia" id="48401">
    <property type="antibodies" value="73 antibodies from 15 providers"/>
</dbReference>
<dbReference type="DNASU" id="283848"/>
<dbReference type="Ensembl" id="ENST00000535696.1">
    <molecule id="Q5XG92-7"/>
    <property type="protein sequence ID" value="ENSP00000441644.1"/>
    <property type="gene ID" value="ENSG00000172824.17"/>
</dbReference>
<dbReference type="Ensembl" id="ENST00000540579.6">
    <molecule id="Q5XG92-6"/>
    <property type="protein sequence ID" value="ENSP00000441907.1"/>
    <property type="gene ID" value="ENSG00000172824.17"/>
</dbReference>
<dbReference type="Ensembl" id="ENST00000540947.6">
    <molecule id="Q5XG92-5"/>
    <property type="protein sequence ID" value="ENSP00000444052.2"/>
    <property type="gene ID" value="ENSG00000172824.17"/>
</dbReference>
<dbReference type="Ensembl" id="ENST00000648724.3">
    <molecule id="Q5XG92-1"/>
    <property type="protein sequence ID" value="ENSP00000497868.2"/>
    <property type="gene ID" value="ENSG00000172824.17"/>
</dbReference>
<dbReference type="GeneID" id="283848"/>
<dbReference type="KEGG" id="hsa:283848"/>
<dbReference type="MANE-Select" id="ENST00000648724.3">
    <property type="protein sequence ID" value="ENSP00000497868.2"/>
    <property type="RefSeq nucleotide sequence ID" value="NM_001364782.1"/>
    <property type="RefSeq protein sequence ID" value="NP_001351711.1"/>
</dbReference>
<dbReference type="UCSC" id="uc002eqy.4">
    <molecule id="Q5XG92-1"/>
    <property type="organism name" value="human"/>
</dbReference>
<dbReference type="AGR" id="HGNC:26741"/>
<dbReference type="CTD" id="283848"/>
<dbReference type="DisGeNET" id="283848"/>
<dbReference type="GeneCards" id="CES4A"/>
<dbReference type="HGNC" id="HGNC:26741">
    <property type="gene designation" value="CES4A"/>
</dbReference>
<dbReference type="HPA" id="ENSG00000172824">
    <property type="expression patterns" value="Tissue enhanced (fallopian tube, skin)"/>
</dbReference>
<dbReference type="neXtProt" id="NX_Q5XG92"/>
<dbReference type="OpenTargets" id="ENSG00000172824"/>
<dbReference type="PharmGKB" id="PA164717904"/>
<dbReference type="VEuPathDB" id="HostDB:ENSG00000172824"/>
<dbReference type="eggNOG" id="KOG1516">
    <property type="taxonomic scope" value="Eukaryota"/>
</dbReference>
<dbReference type="GeneTree" id="ENSGT00940000162924"/>
<dbReference type="HOGENOM" id="CLU_006586_19_0_1"/>
<dbReference type="InParanoid" id="Q5XG92"/>
<dbReference type="OMA" id="CWPRYDK"/>
<dbReference type="OrthoDB" id="3200163at2759"/>
<dbReference type="PAN-GO" id="Q5XG92">
    <property type="GO annotations" value="0 GO annotations based on evolutionary models"/>
</dbReference>
<dbReference type="PhylomeDB" id="Q5XG92"/>
<dbReference type="TreeFam" id="TF315470"/>
<dbReference type="PathwayCommons" id="Q5XG92"/>
<dbReference type="BioGRID-ORCS" id="283848">
    <property type="hits" value="14 hits in 1145 CRISPR screens"/>
</dbReference>
<dbReference type="ChiTaRS" id="CES4A">
    <property type="organism name" value="human"/>
</dbReference>
<dbReference type="GenomeRNAi" id="283848"/>
<dbReference type="Pharos" id="Q5XG92">
    <property type="development level" value="Tbio"/>
</dbReference>
<dbReference type="PRO" id="PR:Q5XG92"/>
<dbReference type="Proteomes" id="UP000005640">
    <property type="component" value="Chromosome 16"/>
</dbReference>
<dbReference type="RNAct" id="Q5XG92">
    <property type="molecule type" value="protein"/>
</dbReference>
<dbReference type="Bgee" id="ENSG00000172824">
    <property type="expression patterns" value="Expressed in right uterine tube and 117 other cell types or tissues"/>
</dbReference>
<dbReference type="ExpressionAtlas" id="Q5XG92">
    <property type="expression patterns" value="baseline and differential"/>
</dbReference>
<dbReference type="GO" id="GO:0005576">
    <property type="term" value="C:extracellular region"/>
    <property type="evidence" value="ECO:0007669"/>
    <property type="project" value="UniProtKB-SubCell"/>
</dbReference>
<dbReference type="GO" id="GO:0052689">
    <property type="term" value="F:carboxylic ester hydrolase activity"/>
    <property type="evidence" value="ECO:0007669"/>
    <property type="project" value="UniProtKB-KW"/>
</dbReference>
<dbReference type="CDD" id="cd00312">
    <property type="entry name" value="Esterase_lipase"/>
    <property type="match status" value="1"/>
</dbReference>
<dbReference type="FunFam" id="3.40.50.1820:FF:000011">
    <property type="entry name" value="Carboxylic ester hydrolase"/>
    <property type="match status" value="1"/>
</dbReference>
<dbReference type="Gene3D" id="3.40.50.1820">
    <property type="entry name" value="alpha/beta hydrolase"/>
    <property type="match status" value="1"/>
</dbReference>
<dbReference type="InterPro" id="IPR029058">
    <property type="entry name" value="AB_hydrolase_fold"/>
</dbReference>
<dbReference type="InterPro" id="IPR002018">
    <property type="entry name" value="CarbesteraseB"/>
</dbReference>
<dbReference type="InterPro" id="IPR019826">
    <property type="entry name" value="Carboxylesterase_B_AS"/>
</dbReference>
<dbReference type="InterPro" id="IPR019819">
    <property type="entry name" value="Carboxylesterase_B_CS"/>
</dbReference>
<dbReference type="InterPro" id="IPR050309">
    <property type="entry name" value="Type-B_Carboxylest/Lipase"/>
</dbReference>
<dbReference type="PANTHER" id="PTHR11559">
    <property type="entry name" value="CARBOXYLESTERASE"/>
    <property type="match status" value="1"/>
</dbReference>
<dbReference type="Pfam" id="PF00135">
    <property type="entry name" value="COesterase"/>
    <property type="match status" value="1"/>
</dbReference>
<dbReference type="SUPFAM" id="SSF53474">
    <property type="entry name" value="alpha/beta-Hydrolases"/>
    <property type="match status" value="1"/>
</dbReference>
<dbReference type="PROSITE" id="PS00122">
    <property type="entry name" value="CARBOXYLESTERASE_B_1"/>
    <property type="match status" value="1"/>
</dbReference>
<dbReference type="PROSITE" id="PS00941">
    <property type="entry name" value="CARBOXYLESTERASE_B_2"/>
    <property type="match status" value="1"/>
</dbReference>
<protein>
    <recommendedName>
        <fullName>Carboxylesterase 4A</fullName>
        <ecNumber>3.1.1.-</ecNumber>
    </recommendedName>
</protein>